<sequence length="565" mass="62759">MRQSIFFMPTLKETPADAVAKSHQVMLRGGYIRQVTAGVYSYLPLGYKVLRKTEKIIEEEMANAGVVEMIMPHMLPASMWEESGRLPKYGPEMFRLKDRHGREMLLGPTHEETFTDVVAKSLKSYKQMPLQLYQIQTKFRDENRPRFGLLRGREFVMLDGYSFAASQEQLDKQFDDEKAAYLKIFKRTGVEVRPVIADSGTMGGKNSIEFQAPAAVGEDTIATNASGTYAANLEMAVSVDTFKQEPEELKAMEKVATPGCDSIDKLAEFLQVPATRIVKSVLYIVDEKKKVLVLIRADKEVNEVKLTHLLDCDSLRVAETSDLEELTGAGKGGVGPVNADWADEIVADKTVKGLYNVVVGAGESDAQFINANLDRDFRADRFADLRVANEGEPDPVDHEPLKFTTSIEVGHIFKLGTYYTETMGAKFLDQNGKSQPVIMGSYGIGVTRLLSAVVEQHATENGVAWPKEIAPFGIHIIQMKMKDEIQSKLAEDLEAKFAKYDVLYDDRNERPGVKFNDADLVGAPIRITVGRDAADGIVEVKRPGDDQAQKLAVADLEDFIANELD</sequence>
<feature type="chain" id="PRO_0000288336" description="Proline--tRNA ligase">
    <location>
        <begin position="1"/>
        <end position="565"/>
    </location>
</feature>
<gene>
    <name evidence="1" type="primary">proS</name>
    <name type="ordered locus">Ldb1338</name>
</gene>
<protein>
    <recommendedName>
        <fullName evidence="1">Proline--tRNA ligase</fullName>
        <ecNumber evidence="1">6.1.1.15</ecNumber>
    </recommendedName>
    <alternativeName>
        <fullName evidence="1">Prolyl-tRNA synthetase</fullName>
        <shortName evidence="1">ProRS</shortName>
    </alternativeName>
</protein>
<proteinExistence type="inferred from homology"/>
<keyword id="KW-0030">Aminoacyl-tRNA synthetase</keyword>
<keyword id="KW-0067">ATP-binding</keyword>
<keyword id="KW-0963">Cytoplasm</keyword>
<keyword id="KW-0436">Ligase</keyword>
<keyword id="KW-0547">Nucleotide-binding</keyword>
<keyword id="KW-0648">Protein biosynthesis</keyword>
<keyword id="KW-1185">Reference proteome</keyword>
<accession>Q1G9P3</accession>
<name>SYP_LACDA</name>
<comment type="function">
    <text evidence="1">Catalyzes the attachment of proline to tRNA(Pro) in a two-step reaction: proline is first activated by ATP to form Pro-AMP and then transferred to the acceptor end of tRNA(Pro). As ProRS can inadvertently accommodate and process non-cognate amino acids such as alanine and cysteine, to avoid such errors it has two additional distinct editing activities against alanine. One activity is designated as 'pretransfer' editing and involves the tRNA(Pro)-independent hydrolysis of activated Ala-AMP. The other activity is designated 'posttransfer' editing and involves deacylation of mischarged Ala-tRNA(Pro). The misacylated Cys-tRNA(Pro) is not edited by ProRS.</text>
</comment>
<comment type="catalytic activity">
    <reaction evidence="1">
        <text>tRNA(Pro) + L-proline + ATP = L-prolyl-tRNA(Pro) + AMP + diphosphate</text>
        <dbReference type="Rhea" id="RHEA:14305"/>
        <dbReference type="Rhea" id="RHEA-COMP:9700"/>
        <dbReference type="Rhea" id="RHEA-COMP:9702"/>
        <dbReference type="ChEBI" id="CHEBI:30616"/>
        <dbReference type="ChEBI" id="CHEBI:33019"/>
        <dbReference type="ChEBI" id="CHEBI:60039"/>
        <dbReference type="ChEBI" id="CHEBI:78442"/>
        <dbReference type="ChEBI" id="CHEBI:78532"/>
        <dbReference type="ChEBI" id="CHEBI:456215"/>
        <dbReference type="EC" id="6.1.1.15"/>
    </reaction>
</comment>
<comment type="subunit">
    <text evidence="1">Homodimer.</text>
</comment>
<comment type="subcellular location">
    <subcellularLocation>
        <location evidence="1">Cytoplasm</location>
    </subcellularLocation>
</comment>
<comment type="domain">
    <text evidence="1">Consists of three domains: the N-terminal catalytic domain, the editing domain and the C-terminal anticodon-binding domain.</text>
</comment>
<comment type="similarity">
    <text evidence="1">Belongs to the class-II aminoacyl-tRNA synthetase family. ProS type 1 subfamily.</text>
</comment>
<dbReference type="EC" id="6.1.1.15" evidence="1"/>
<dbReference type="EMBL" id="CR954253">
    <property type="protein sequence ID" value="CAI98139.1"/>
    <property type="molecule type" value="Genomic_DNA"/>
</dbReference>
<dbReference type="RefSeq" id="WP_011544005.1">
    <property type="nucleotide sequence ID" value="NC_008054.1"/>
</dbReference>
<dbReference type="SMR" id="Q1G9P3"/>
<dbReference type="STRING" id="390333.Ldb1338"/>
<dbReference type="KEGG" id="ldb:Ldb1338"/>
<dbReference type="PATRIC" id="fig|390333.13.peg.1705"/>
<dbReference type="eggNOG" id="COG0442">
    <property type="taxonomic scope" value="Bacteria"/>
</dbReference>
<dbReference type="HOGENOM" id="CLU_016739_0_0_9"/>
<dbReference type="BioCyc" id="LDEL390333:LDB_RS05725-MONOMER"/>
<dbReference type="Proteomes" id="UP000001259">
    <property type="component" value="Chromosome"/>
</dbReference>
<dbReference type="GO" id="GO:0005829">
    <property type="term" value="C:cytosol"/>
    <property type="evidence" value="ECO:0007669"/>
    <property type="project" value="TreeGrafter"/>
</dbReference>
<dbReference type="GO" id="GO:0002161">
    <property type="term" value="F:aminoacyl-tRNA deacylase activity"/>
    <property type="evidence" value="ECO:0007669"/>
    <property type="project" value="InterPro"/>
</dbReference>
<dbReference type="GO" id="GO:0005524">
    <property type="term" value="F:ATP binding"/>
    <property type="evidence" value="ECO:0007669"/>
    <property type="project" value="UniProtKB-UniRule"/>
</dbReference>
<dbReference type="GO" id="GO:0140096">
    <property type="term" value="F:catalytic activity, acting on a protein"/>
    <property type="evidence" value="ECO:0007669"/>
    <property type="project" value="UniProtKB-ARBA"/>
</dbReference>
<dbReference type="GO" id="GO:0004827">
    <property type="term" value="F:proline-tRNA ligase activity"/>
    <property type="evidence" value="ECO:0007669"/>
    <property type="project" value="UniProtKB-UniRule"/>
</dbReference>
<dbReference type="GO" id="GO:0016740">
    <property type="term" value="F:transferase activity"/>
    <property type="evidence" value="ECO:0007669"/>
    <property type="project" value="UniProtKB-ARBA"/>
</dbReference>
<dbReference type="GO" id="GO:0006433">
    <property type="term" value="P:prolyl-tRNA aminoacylation"/>
    <property type="evidence" value="ECO:0007669"/>
    <property type="project" value="UniProtKB-UniRule"/>
</dbReference>
<dbReference type="CDD" id="cd04334">
    <property type="entry name" value="ProRS-INS"/>
    <property type="match status" value="1"/>
</dbReference>
<dbReference type="CDD" id="cd00861">
    <property type="entry name" value="ProRS_anticodon_short"/>
    <property type="match status" value="1"/>
</dbReference>
<dbReference type="CDD" id="cd00779">
    <property type="entry name" value="ProRS_core_prok"/>
    <property type="match status" value="1"/>
</dbReference>
<dbReference type="FunFam" id="3.40.50.800:FF:000011">
    <property type="entry name" value="Proline--tRNA ligase"/>
    <property type="match status" value="1"/>
</dbReference>
<dbReference type="Gene3D" id="3.40.50.800">
    <property type="entry name" value="Anticodon-binding domain"/>
    <property type="match status" value="1"/>
</dbReference>
<dbReference type="Gene3D" id="3.30.930.10">
    <property type="entry name" value="Bira Bifunctional Protein, Domain 2"/>
    <property type="match status" value="2"/>
</dbReference>
<dbReference type="HAMAP" id="MF_01569">
    <property type="entry name" value="Pro_tRNA_synth_type1"/>
    <property type="match status" value="1"/>
</dbReference>
<dbReference type="InterPro" id="IPR002314">
    <property type="entry name" value="aa-tRNA-synt_IIb"/>
</dbReference>
<dbReference type="InterPro" id="IPR006195">
    <property type="entry name" value="aa-tRNA-synth_II"/>
</dbReference>
<dbReference type="InterPro" id="IPR045864">
    <property type="entry name" value="aa-tRNA-synth_II/BPL/LPL"/>
</dbReference>
<dbReference type="InterPro" id="IPR004154">
    <property type="entry name" value="Anticodon-bd"/>
</dbReference>
<dbReference type="InterPro" id="IPR036621">
    <property type="entry name" value="Anticodon-bd_dom_sf"/>
</dbReference>
<dbReference type="InterPro" id="IPR002316">
    <property type="entry name" value="Pro-tRNA-ligase_IIa"/>
</dbReference>
<dbReference type="InterPro" id="IPR004500">
    <property type="entry name" value="Pro-tRNA-synth_IIa_bac-type"/>
</dbReference>
<dbReference type="InterPro" id="IPR023717">
    <property type="entry name" value="Pro-tRNA-Synthase_IIa_type1"/>
</dbReference>
<dbReference type="InterPro" id="IPR050062">
    <property type="entry name" value="Pro-tRNA_synthetase"/>
</dbReference>
<dbReference type="InterPro" id="IPR044140">
    <property type="entry name" value="ProRS_anticodon_short"/>
</dbReference>
<dbReference type="InterPro" id="IPR033730">
    <property type="entry name" value="ProRS_core_prok"/>
</dbReference>
<dbReference type="InterPro" id="IPR036754">
    <property type="entry name" value="YbaK/aa-tRNA-synt-asso_dom_sf"/>
</dbReference>
<dbReference type="InterPro" id="IPR007214">
    <property type="entry name" value="YbaK/aa-tRNA-synth-assoc-dom"/>
</dbReference>
<dbReference type="NCBIfam" id="NF006625">
    <property type="entry name" value="PRK09194.1"/>
    <property type="match status" value="1"/>
</dbReference>
<dbReference type="NCBIfam" id="TIGR00409">
    <property type="entry name" value="proS_fam_II"/>
    <property type="match status" value="1"/>
</dbReference>
<dbReference type="PANTHER" id="PTHR42753">
    <property type="entry name" value="MITOCHONDRIAL RIBOSOME PROTEIN L39/PROLYL-TRNA LIGASE FAMILY MEMBER"/>
    <property type="match status" value="1"/>
</dbReference>
<dbReference type="PANTHER" id="PTHR42753:SF2">
    <property type="entry name" value="PROLINE--TRNA LIGASE"/>
    <property type="match status" value="1"/>
</dbReference>
<dbReference type="Pfam" id="PF03129">
    <property type="entry name" value="HGTP_anticodon"/>
    <property type="match status" value="1"/>
</dbReference>
<dbReference type="Pfam" id="PF00587">
    <property type="entry name" value="tRNA-synt_2b"/>
    <property type="match status" value="1"/>
</dbReference>
<dbReference type="Pfam" id="PF04073">
    <property type="entry name" value="tRNA_edit"/>
    <property type="match status" value="1"/>
</dbReference>
<dbReference type="PRINTS" id="PR01046">
    <property type="entry name" value="TRNASYNTHPRO"/>
</dbReference>
<dbReference type="SUPFAM" id="SSF52954">
    <property type="entry name" value="Class II aaRS ABD-related"/>
    <property type="match status" value="1"/>
</dbReference>
<dbReference type="SUPFAM" id="SSF55681">
    <property type="entry name" value="Class II aaRS and biotin synthetases"/>
    <property type="match status" value="1"/>
</dbReference>
<dbReference type="SUPFAM" id="SSF55826">
    <property type="entry name" value="YbaK/ProRS associated domain"/>
    <property type="match status" value="1"/>
</dbReference>
<dbReference type="PROSITE" id="PS50862">
    <property type="entry name" value="AA_TRNA_LIGASE_II"/>
    <property type="match status" value="1"/>
</dbReference>
<reference key="1">
    <citation type="journal article" date="2006" name="Proc. Natl. Acad. Sci. U.S.A.">
        <title>The complete genome sequence of Lactobacillus bulgaricus reveals extensive and ongoing reductive evolution.</title>
        <authorList>
            <person name="van de Guchte M."/>
            <person name="Penaud S."/>
            <person name="Grimaldi C."/>
            <person name="Barbe V."/>
            <person name="Bryson K."/>
            <person name="Nicolas P."/>
            <person name="Robert C."/>
            <person name="Oztas S."/>
            <person name="Mangenot S."/>
            <person name="Couloux A."/>
            <person name="Loux V."/>
            <person name="Dervyn R."/>
            <person name="Bossy R."/>
            <person name="Bolotin A."/>
            <person name="Batto J.-M."/>
            <person name="Walunas T."/>
            <person name="Gibrat J.-F."/>
            <person name="Bessieres P."/>
            <person name="Weissenbach J."/>
            <person name="Ehrlich S.D."/>
            <person name="Maguin E."/>
        </authorList>
    </citation>
    <scope>NUCLEOTIDE SEQUENCE [LARGE SCALE GENOMIC DNA]</scope>
    <source>
        <strain>ATCC 11842 / DSM 20081 / BCRC 10696 / JCM 1002 / NBRC 13953 / NCIMB 11778 / NCTC 12712 / WDCM 00102 / Lb 14</strain>
    </source>
</reference>
<organism>
    <name type="scientific">Lactobacillus delbrueckii subsp. bulgaricus (strain ATCC 11842 / DSM 20081 / BCRC 10696 / JCM 1002 / NBRC 13953 / NCIMB 11778 / NCTC 12712 / WDCM 00102 / Lb 14)</name>
    <dbReference type="NCBI Taxonomy" id="390333"/>
    <lineage>
        <taxon>Bacteria</taxon>
        <taxon>Bacillati</taxon>
        <taxon>Bacillota</taxon>
        <taxon>Bacilli</taxon>
        <taxon>Lactobacillales</taxon>
        <taxon>Lactobacillaceae</taxon>
        <taxon>Lactobacillus</taxon>
    </lineage>
</organism>
<evidence type="ECO:0000255" key="1">
    <source>
        <dbReference type="HAMAP-Rule" id="MF_01569"/>
    </source>
</evidence>